<name>PANCY_SYNS9</name>
<reference key="1">
    <citation type="submission" date="2005-08" db="EMBL/GenBank/DDBJ databases">
        <title>Complete sequence of Synechococcus sp. CC9902.</title>
        <authorList>
            <person name="Copeland A."/>
            <person name="Lucas S."/>
            <person name="Lapidus A."/>
            <person name="Barry K."/>
            <person name="Detter J.C."/>
            <person name="Glavina T."/>
            <person name="Hammon N."/>
            <person name="Israni S."/>
            <person name="Pitluck S."/>
            <person name="Martinez M."/>
            <person name="Schmutz J."/>
            <person name="Larimer F."/>
            <person name="Land M."/>
            <person name="Kyrpides N."/>
            <person name="Ivanova N."/>
            <person name="Richardson P."/>
        </authorList>
    </citation>
    <scope>NUCLEOTIDE SEQUENCE [LARGE SCALE GENOMIC DNA]</scope>
    <source>
        <strain>CC9902</strain>
    </source>
</reference>
<comment type="function">
    <text evidence="1">Catalyzes the condensation of pantoate with beta-alanine in an ATP-dependent reaction via a pantoyl-adenylate intermediate.</text>
</comment>
<comment type="function">
    <text evidence="1">Catalyzes the transfer of a phosphate group from ATP to either CMP or dCMP to form CDP or dCDP and ADP, respectively.</text>
</comment>
<comment type="catalytic activity">
    <reaction evidence="1">
        <text>(R)-pantoate + beta-alanine + ATP = (R)-pantothenate + AMP + diphosphate + H(+)</text>
        <dbReference type="Rhea" id="RHEA:10912"/>
        <dbReference type="ChEBI" id="CHEBI:15378"/>
        <dbReference type="ChEBI" id="CHEBI:15980"/>
        <dbReference type="ChEBI" id="CHEBI:29032"/>
        <dbReference type="ChEBI" id="CHEBI:30616"/>
        <dbReference type="ChEBI" id="CHEBI:33019"/>
        <dbReference type="ChEBI" id="CHEBI:57966"/>
        <dbReference type="ChEBI" id="CHEBI:456215"/>
        <dbReference type="EC" id="6.3.2.1"/>
    </reaction>
</comment>
<comment type="catalytic activity">
    <reaction evidence="1">
        <text>CMP + ATP = CDP + ADP</text>
        <dbReference type="Rhea" id="RHEA:11600"/>
        <dbReference type="ChEBI" id="CHEBI:30616"/>
        <dbReference type="ChEBI" id="CHEBI:58069"/>
        <dbReference type="ChEBI" id="CHEBI:60377"/>
        <dbReference type="ChEBI" id="CHEBI:456216"/>
        <dbReference type="EC" id="2.7.4.25"/>
    </reaction>
</comment>
<comment type="catalytic activity">
    <reaction evidence="1">
        <text>dCMP + ATP = dCDP + ADP</text>
        <dbReference type="Rhea" id="RHEA:25094"/>
        <dbReference type="ChEBI" id="CHEBI:30616"/>
        <dbReference type="ChEBI" id="CHEBI:57566"/>
        <dbReference type="ChEBI" id="CHEBI:58593"/>
        <dbReference type="ChEBI" id="CHEBI:456216"/>
        <dbReference type="EC" id="2.7.4.25"/>
    </reaction>
</comment>
<comment type="pathway">
    <text evidence="1">Cofactor biosynthesis; (R)-pantothenate biosynthesis; (R)-pantothenate from (R)-pantoate and beta-alanine: step 1/1.</text>
</comment>
<comment type="subcellular location">
    <subcellularLocation>
        <location evidence="1">Cytoplasm</location>
    </subcellularLocation>
</comment>
<comment type="similarity">
    <text evidence="1">In the N-terminal section; belongs to the pantothenate synthetase family.</text>
</comment>
<comment type="similarity">
    <text evidence="1">In the C-terminal section; belongs to the cytidylate kinase family. Type 1 subfamily.</text>
</comment>
<accession>Q3AUV1</accession>
<evidence type="ECO:0000255" key="1">
    <source>
        <dbReference type="HAMAP-Rule" id="MF_01349"/>
    </source>
</evidence>
<proteinExistence type="inferred from homology"/>
<feature type="chain" id="PRO_0000239800" description="Bifunctional pantoate ligase/cytidylate kinase">
    <location>
        <begin position="1"/>
        <end position="483"/>
    </location>
</feature>
<feature type="region of interest" description="Pantoate--beta-alanine ligase" evidence="1">
    <location>
        <begin position="1"/>
        <end position="246"/>
    </location>
</feature>
<feature type="region of interest" description="Cytidylate kinase" evidence="1">
    <location>
        <begin position="247"/>
        <end position="483"/>
    </location>
</feature>
<feature type="active site" description="Proton donor" evidence="1">
    <location>
        <position position="11"/>
    </location>
</feature>
<feature type="binding site" evidence="1">
    <location>
        <begin position="4"/>
        <end position="11"/>
    </location>
    <ligand>
        <name>ATP</name>
        <dbReference type="ChEBI" id="CHEBI:30616"/>
    </ligand>
</feature>
<feature type="binding site" evidence="1">
    <location>
        <position position="34"/>
    </location>
    <ligand>
        <name>(R)-pantoate</name>
        <dbReference type="ChEBI" id="CHEBI:15980"/>
    </ligand>
</feature>
<feature type="binding site" evidence="1">
    <location>
        <position position="34"/>
    </location>
    <ligand>
        <name>beta-alanine</name>
        <dbReference type="ChEBI" id="CHEBI:57966"/>
    </ligand>
</feature>
<feature type="binding site" evidence="1">
    <location>
        <begin position="124"/>
        <end position="127"/>
    </location>
    <ligand>
        <name>ATP</name>
        <dbReference type="ChEBI" id="CHEBI:30616"/>
    </ligand>
</feature>
<feature type="binding site" evidence="1">
    <location>
        <position position="130"/>
    </location>
    <ligand>
        <name>(R)-pantoate</name>
        <dbReference type="ChEBI" id="CHEBI:15980"/>
    </ligand>
</feature>
<feature type="binding site" evidence="1">
    <location>
        <position position="153"/>
    </location>
    <ligand>
        <name>ATP</name>
        <dbReference type="ChEBI" id="CHEBI:30616"/>
    </ligand>
</feature>
<feature type="binding site" evidence="1">
    <location>
        <begin position="161"/>
        <end position="164"/>
    </location>
    <ligand>
        <name>ATP</name>
        <dbReference type="ChEBI" id="CHEBI:30616"/>
    </ligand>
</feature>
<organism>
    <name type="scientific">Synechococcus sp. (strain CC9902)</name>
    <dbReference type="NCBI Taxonomy" id="316279"/>
    <lineage>
        <taxon>Bacteria</taxon>
        <taxon>Bacillati</taxon>
        <taxon>Cyanobacteriota</taxon>
        <taxon>Cyanophyceae</taxon>
        <taxon>Synechococcales</taxon>
        <taxon>Synechococcaceae</taxon>
        <taxon>Synechococcus</taxon>
    </lineage>
</organism>
<sequence>MPTMGALHAGHGTVIRAASAMGPVLVSVFVNPLQFGPDEDLARYPRSLESDLVVAERWGAAALWAPSVEQIYPQGGERHPSTIQVPPGLQKHLCGAARPGHFDGVVTVVARLLDLVRPRQLWLGEKDWQQLVILRWLVAHLARPVIVQGVATVREADGLALSSRNQYLSPDQRRMAAALPEALHAARGDGSDPIPALRGSLSDAGFEVEYVQRVDPCTLQPCGDETAISLLAAAVRCGSTRLIDHAFLMTRQPLVAIDGPAGAGKSTVTRAFAERLGLVYLDTGAMYRSVTWLVLERGVNPSDGVAIEPLLKDLDVQLQSLPGGVQQVLVNGEDVSSAIRSPDVTASVSAVAAHRCVRQALTVQQKSMGSKGGLVAEGRDIGTAVFPHADLKVFLTATVTERARRRALDLEQRGFAVPERAELEAQIAERDRLDSTREEAPLMQADDAIELVTDGMDIDAVIEALVRLFRERVAEEAWPTPQR</sequence>
<dbReference type="EC" id="6.3.2.1" evidence="1"/>
<dbReference type="EC" id="2.7.4.25" evidence="1"/>
<dbReference type="EMBL" id="CP000097">
    <property type="protein sequence ID" value="ABB26871.1"/>
    <property type="molecule type" value="Genomic_DNA"/>
</dbReference>
<dbReference type="SMR" id="Q3AUV1"/>
<dbReference type="STRING" id="316279.Syncc9902_1914"/>
<dbReference type="KEGG" id="sye:Syncc9902_1914"/>
<dbReference type="eggNOG" id="COG0283">
    <property type="taxonomic scope" value="Bacteria"/>
</dbReference>
<dbReference type="eggNOG" id="COG0414">
    <property type="taxonomic scope" value="Bacteria"/>
</dbReference>
<dbReference type="HOGENOM" id="CLU_037427_0_0_3"/>
<dbReference type="UniPathway" id="UPA00028">
    <property type="reaction ID" value="UER00005"/>
</dbReference>
<dbReference type="Proteomes" id="UP000002712">
    <property type="component" value="Chromosome"/>
</dbReference>
<dbReference type="GO" id="GO:0005829">
    <property type="term" value="C:cytosol"/>
    <property type="evidence" value="ECO:0007669"/>
    <property type="project" value="TreeGrafter"/>
</dbReference>
<dbReference type="GO" id="GO:0005524">
    <property type="term" value="F:ATP binding"/>
    <property type="evidence" value="ECO:0007669"/>
    <property type="project" value="UniProtKB-UniRule"/>
</dbReference>
<dbReference type="GO" id="GO:0036430">
    <property type="term" value="F:CMP kinase activity"/>
    <property type="evidence" value="ECO:0007669"/>
    <property type="project" value="RHEA"/>
</dbReference>
<dbReference type="GO" id="GO:0036431">
    <property type="term" value="F:dCMP kinase activity"/>
    <property type="evidence" value="ECO:0007669"/>
    <property type="project" value="RHEA"/>
</dbReference>
<dbReference type="GO" id="GO:0004592">
    <property type="term" value="F:pantoate-beta-alanine ligase activity"/>
    <property type="evidence" value="ECO:0007669"/>
    <property type="project" value="UniProtKB-UniRule"/>
</dbReference>
<dbReference type="GO" id="GO:0015949">
    <property type="term" value="P:nucleobase-containing small molecule interconversion"/>
    <property type="evidence" value="ECO:0007669"/>
    <property type="project" value="TreeGrafter"/>
</dbReference>
<dbReference type="GO" id="GO:0015940">
    <property type="term" value="P:pantothenate biosynthetic process"/>
    <property type="evidence" value="ECO:0007669"/>
    <property type="project" value="UniProtKB-UniRule"/>
</dbReference>
<dbReference type="GO" id="GO:0006220">
    <property type="term" value="P:pyrimidine nucleotide metabolic process"/>
    <property type="evidence" value="ECO:0007669"/>
    <property type="project" value="UniProtKB-UniRule"/>
</dbReference>
<dbReference type="CDD" id="cd02020">
    <property type="entry name" value="CMPK"/>
    <property type="match status" value="1"/>
</dbReference>
<dbReference type="Gene3D" id="3.40.50.620">
    <property type="entry name" value="HUPs"/>
    <property type="match status" value="1"/>
</dbReference>
<dbReference type="Gene3D" id="3.40.50.300">
    <property type="entry name" value="P-loop containing nucleotide triphosphate hydrolases"/>
    <property type="match status" value="1"/>
</dbReference>
<dbReference type="Gene3D" id="3.30.1300.10">
    <property type="entry name" value="Pantoate-beta-alanine ligase, C-terminal domain"/>
    <property type="match status" value="1"/>
</dbReference>
<dbReference type="HAMAP" id="MF_00238">
    <property type="entry name" value="Cytidyl_kinase_type1"/>
    <property type="match status" value="1"/>
</dbReference>
<dbReference type="HAMAP" id="MF_00158">
    <property type="entry name" value="PanC"/>
    <property type="match status" value="1"/>
</dbReference>
<dbReference type="HAMAP" id="MF_01349">
    <property type="entry name" value="PanCY"/>
    <property type="match status" value="1"/>
</dbReference>
<dbReference type="InterPro" id="IPR003136">
    <property type="entry name" value="Cytidylate_kin"/>
</dbReference>
<dbReference type="InterPro" id="IPR011994">
    <property type="entry name" value="Cytidylate_kinase_dom"/>
</dbReference>
<dbReference type="InterPro" id="IPR027417">
    <property type="entry name" value="P-loop_NTPase"/>
</dbReference>
<dbReference type="InterPro" id="IPR003721">
    <property type="entry name" value="Pantoate_ligase"/>
</dbReference>
<dbReference type="InterPro" id="IPR024894">
    <property type="entry name" value="Pantoate_ligase/cytidylate_kin"/>
</dbReference>
<dbReference type="InterPro" id="IPR042176">
    <property type="entry name" value="Pantoate_ligase_C"/>
</dbReference>
<dbReference type="InterPro" id="IPR014729">
    <property type="entry name" value="Rossmann-like_a/b/a_fold"/>
</dbReference>
<dbReference type="NCBIfam" id="TIGR00017">
    <property type="entry name" value="cmk"/>
    <property type="match status" value="1"/>
</dbReference>
<dbReference type="NCBIfam" id="TIGR00018">
    <property type="entry name" value="panC"/>
    <property type="match status" value="1"/>
</dbReference>
<dbReference type="NCBIfam" id="NF010004">
    <property type="entry name" value="PRK13477.1"/>
    <property type="match status" value="1"/>
</dbReference>
<dbReference type="PANTHER" id="PTHR21299:SF2">
    <property type="entry name" value="CYTIDYLATE KINASE"/>
    <property type="match status" value="1"/>
</dbReference>
<dbReference type="PANTHER" id="PTHR21299">
    <property type="entry name" value="CYTIDYLATE KINASE/PANTOATE-BETA-ALANINE LIGASE"/>
    <property type="match status" value="1"/>
</dbReference>
<dbReference type="Pfam" id="PF02224">
    <property type="entry name" value="Cytidylate_kin"/>
    <property type="match status" value="1"/>
</dbReference>
<dbReference type="Pfam" id="PF02569">
    <property type="entry name" value="Pantoate_ligase"/>
    <property type="match status" value="1"/>
</dbReference>
<dbReference type="SUPFAM" id="SSF52374">
    <property type="entry name" value="Nucleotidylyl transferase"/>
    <property type="match status" value="1"/>
</dbReference>
<dbReference type="SUPFAM" id="SSF52540">
    <property type="entry name" value="P-loop containing nucleoside triphosphate hydrolases"/>
    <property type="match status" value="1"/>
</dbReference>
<keyword id="KW-0067">ATP-binding</keyword>
<keyword id="KW-0963">Cytoplasm</keyword>
<keyword id="KW-0418">Kinase</keyword>
<keyword id="KW-0436">Ligase</keyword>
<keyword id="KW-0511">Multifunctional enzyme</keyword>
<keyword id="KW-0547">Nucleotide-binding</keyword>
<keyword id="KW-0566">Pantothenate biosynthesis</keyword>
<keyword id="KW-1185">Reference proteome</keyword>
<keyword id="KW-0808">Transferase</keyword>
<protein>
    <recommendedName>
        <fullName evidence="1">Bifunctional pantoate ligase/cytidylate kinase</fullName>
    </recommendedName>
    <domain>
        <recommendedName>
            <fullName evidence="1">Pantothenate synthetase</fullName>
            <shortName evidence="1">PS</shortName>
            <ecNumber evidence="1">6.3.2.1</ecNumber>
        </recommendedName>
        <alternativeName>
            <fullName evidence="1">Pantoate--beta-alanine ligase</fullName>
        </alternativeName>
        <alternativeName>
            <fullName evidence="1">Pantoate-activating enzyme</fullName>
        </alternativeName>
    </domain>
    <domain>
        <recommendedName>
            <fullName evidence="1">Cytidylate kinase</fullName>
            <shortName evidence="1">CK</shortName>
            <ecNumber evidence="1">2.7.4.25</ecNumber>
        </recommendedName>
        <alternativeName>
            <fullName evidence="1">Cytidine monophosphate kinase</fullName>
            <shortName evidence="1">CMP kinase</shortName>
        </alternativeName>
    </domain>
</protein>
<gene>
    <name evidence="1" type="primary">panC/cmk</name>
    <name type="ordered locus">Syncc9902_1914</name>
</gene>